<accession>Q3ZXC5</accession>
<evidence type="ECO:0000255" key="1">
    <source>
        <dbReference type="HAMAP-Rule" id="MF_00147"/>
    </source>
</evidence>
<reference key="1">
    <citation type="journal article" date="2005" name="Nat. Biotechnol.">
        <title>Genome sequence of the chlorinated compound-respiring bacterium Dehalococcoides species strain CBDB1.</title>
        <authorList>
            <person name="Kube M."/>
            <person name="Beck A."/>
            <person name="Zinder S.H."/>
            <person name="Kuhl H."/>
            <person name="Reinhardt R."/>
            <person name="Adrian L."/>
        </authorList>
    </citation>
    <scope>NUCLEOTIDE SEQUENCE [LARGE SCALE GENOMIC DNA]</scope>
    <source>
        <strain>CBDB1</strain>
    </source>
</reference>
<proteinExistence type="inferred from homology"/>
<sequence length="253" mass="27417">MRQIIIAGNWKMNTTLSEACTLVQSMKCELERIEGIEKIICPPFISLYPIKTILENSSIKLGAQNLFYQEKGAYTGEISPLMLKELCQYVIIGHSERRAYFGETGQVVNQKIKAALQAGLLPIVCVGEKPEENENGQTRQVLETQLKEALDGLNLSCIIIAYEPIWAIGTGKAATASEANSAIGYIRRVLGDTLGNAAAQTSPILYGGSVNEKNITEILSQTNIDGALVGGASLKAESFVSICRQAAVIQNKH</sequence>
<comment type="function">
    <text evidence="1">Involved in the gluconeogenesis. Catalyzes stereospecifically the conversion of dihydroxyacetone phosphate (DHAP) to D-glyceraldehyde-3-phosphate (G3P).</text>
</comment>
<comment type="catalytic activity">
    <reaction evidence="1">
        <text>D-glyceraldehyde 3-phosphate = dihydroxyacetone phosphate</text>
        <dbReference type="Rhea" id="RHEA:18585"/>
        <dbReference type="ChEBI" id="CHEBI:57642"/>
        <dbReference type="ChEBI" id="CHEBI:59776"/>
        <dbReference type="EC" id="5.3.1.1"/>
    </reaction>
</comment>
<comment type="pathway">
    <text evidence="1">Carbohydrate biosynthesis; gluconeogenesis.</text>
</comment>
<comment type="pathway">
    <text evidence="1">Carbohydrate degradation; glycolysis; D-glyceraldehyde 3-phosphate from glycerone phosphate: step 1/1.</text>
</comment>
<comment type="subunit">
    <text evidence="1">Homodimer.</text>
</comment>
<comment type="subcellular location">
    <subcellularLocation>
        <location evidence="1">Cytoplasm</location>
    </subcellularLocation>
</comment>
<comment type="similarity">
    <text evidence="1">Belongs to the triosephosphate isomerase family.</text>
</comment>
<organism>
    <name type="scientific">Dehalococcoides mccartyi (strain CBDB1)</name>
    <dbReference type="NCBI Taxonomy" id="255470"/>
    <lineage>
        <taxon>Bacteria</taxon>
        <taxon>Bacillati</taxon>
        <taxon>Chloroflexota</taxon>
        <taxon>Dehalococcoidia</taxon>
        <taxon>Dehalococcoidales</taxon>
        <taxon>Dehalococcoidaceae</taxon>
        <taxon>Dehalococcoides</taxon>
    </lineage>
</organism>
<keyword id="KW-0963">Cytoplasm</keyword>
<keyword id="KW-0312">Gluconeogenesis</keyword>
<keyword id="KW-0324">Glycolysis</keyword>
<keyword id="KW-0413">Isomerase</keyword>
<name>TPIS_DEHMC</name>
<feature type="chain" id="PRO_0000307458" description="Triosephosphate isomerase">
    <location>
        <begin position="1"/>
        <end position="253"/>
    </location>
</feature>
<feature type="active site" description="Electrophile" evidence="1">
    <location>
        <position position="94"/>
    </location>
</feature>
<feature type="active site" description="Proton acceptor" evidence="1">
    <location>
        <position position="163"/>
    </location>
</feature>
<feature type="binding site" evidence="1">
    <location>
        <begin position="9"/>
        <end position="11"/>
    </location>
    <ligand>
        <name>substrate</name>
    </ligand>
</feature>
<feature type="binding site" evidence="1">
    <location>
        <position position="169"/>
    </location>
    <ligand>
        <name>substrate</name>
    </ligand>
</feature>
<feature type="binding site" evidence="1">
    <location>
        <position position="209"/>
    </location>
    <ligand>
        <name>substrate</name>
    </ligand>
</feature>
<feature type="binding site" evidence="1">
    <location>
        <begin position="230"/>
        <end position="231"/>
    </location>
    <ligand>
        <name>substrate</name>
    </ligand>
</feature>
<protein>
    <recommendedName>
        <fullName evidence="1">Triosephosphate isomerase</fullName>
        <shortName evidence="1">TIM</shortName>
        <shortName evidence="1">TPI</shortName>
        <ecNumber evidence="1">5.3.1.1</ecNumber>
    </recommendedName>
    <alternativeName>
        <fullName evidence="1">Triose-phosphate isomerase</fullName>
    </alternativeName>
</protein>
<gene>
    <name evidence="1" type="primary">tpiA</name>
    <name type="ordered locus">cbdbA717</name>
</gene>
<dbReference type="EC" id="5.3.1.1" evidence="1"/>
<dbReference type="EMBL" id="AJ965256">
    <property type="protein sequence ID" value="CAI82878.1"/>
    <property type="molecule type" value="Genomic_DNA"/>
</dbReference>
<dbReference type="RefSeq" id="WP_011309229.1">
    <property type="nucleotide sequence ID" value="NC_007356.1"/>
</dbReference>
<dbReference type="SMR" id="Q3ZXC5"/>
<dbReference type="KEGG" id="deh:cbdbA717"/>
<dbReference type="HOGENOM" id="CLU_024251_2_3_0"/>
<dbReference type="UniPathway" id="UPA00109">
    <property type="reaction ID" value="UER00189"/>
</dbReference>
<dbReference type="UniPathway" id="UPA00138"/>
<dbReference type="Proteomes" id="UP000000433">
    <property type="component" value="Chromosome"/>
</dbReference>
<dbReference type="GO" id="GO:0005829">
    <property type="term" value="C:cytosol"/>
    <property type="evidence" value="ECO:0007669"/>
    <property type="project" value="TreeGrafter"/>
</dbReference>
<dbReference type="GO" id="GO:0004807">
    <property type="term" value="F:triose-phosphate isomerase activity"/>
    <property type="evidence" value="ECO:0007669"/>
    <property type="project" value="UniProtKB-UniRule"/>
</dbReference>
<dbReference type="GO" id="GO:0006094">
    <property type="term" value="P:gluconeogenesis"/>
    <property type="evidence" value="ECO:0007669"/>
    <property type="project" value="UniProtKB-UniRule"/>
</dbReference>
<dbReference type="GO" id="GO:0046166">
    <property type="term" value="P:glyceraldehyde-3-phosphate biosynthetic process"/>
    <property type="evidence" value="ECO:0007669"/>
    <property type="project" value="TreeGrafter"/>
</dbReference>
<dbReference type="GO" id="GO:0019563">
    <property type="term" value="P:glycerol catabolic process"/>
    <property type="evidence" value="ECO:0007669"/>
    <property type="project" value="TreeGrafter"/>
</dbReference>
<dbReference type="GO" id="GO:0006096">
    <property type="term" value="P:glycolytic process"/>
    <property type="evidence" value="ECO:0007669"/>
    <property type="project" value="UniProtKB-UniRule"/>
</dbReference>
<dbReference type="CDD" id="cd00311">
    <property type="entry name" value="TIM"/>
    <property type="match status" value="1"/>
</dbReference>
<dbReference type="FunFam" id="3.20.20.70:FF:000016">
    <property type="entry name" value="Triosephosphate isomerase"/>
    <property type="match status" value="1"/>
</dbReference>
<dbReference type="Gene3D" id="3.20.20.70">
    <property type="entry name" value="Aldolase class I"/>
    <property type="match status" value="1"/>
</dbReference>
<dbReference type="HAMAP" id="MF_00147_B">
    <property type="entry name" value="TIM_B"/>
    <property type="match status" value="1"/>
</dbReference>
<dbReference type="InterPro" id="IPR013785">
    <property type="entry name" value="Aldolase_TIM"/>
</dbReference>
<dbReference type="InterPro" id="IPR035990">
    <property type="entry name" value="TIM_sf"/>
</dbReference>
<dbReference type="InterPro" id="IPR022896">
    <property type="entry name" value="TrioseP_Isoase_bac/euk"/>
</dbReference>
<dbReference type="InterPro" id="IPR000652">
    <property type="entry name" value="Triosephosphate_isomerase"/>
</dbReference>
<dbReference type="InterPro" id="IPR020861">
    <property type="entry name" value="Triosephosphate_isomerase_AS"/>
</dbReference>
<dbReference type="NCBIfam" id="TIGR00419">
    <property type="entry name" value="tim"/>
    <property type="match status" value="1"/>
</dbReference>
<dbReference type="PANTHER" id="PTHR21139">
    <property type="entry name" value="TRIOSEPHOSPHATE ISOMERASE"/>
    <property type="match status" value="1"/>
</dbReference>
<dbReference type="PANTHER" id="PTHR21139:SF42">
    <property type="entry name" value="TRIOSEPHOSPHATE ISOMERASE"/>
    <property type="match status" value="1"/>
</dbReference>
<dbReference type="Pfam" id="PF00121">
    <property type="entry name" value="TIM"/>
    <property type="match status" value="1"/>
</dbReference>
<dbReference type="SUPFAM" id="SSF51351">
    <property type="entry name" value="Triosephosphate isomerase (TIM)"/>
    <property type="match status" value="1"/>
</dbReference>
<dbReference type="PROSITE" id="PS00171">
    <property type="entry name" value="TIM_1"/>
    <property type="match status" value="1"/>
</dbReference>
<dbReference type="PROSITE" id="PS51440">
    <property type="entry name" value="TIM_2"/>
    <property type="match status" value="1"/>
</dbReference>